<organism>
    <name type="scientific">Escherichia coli O157:H7 (strain EC4115 / EHEC)</name>
    <dbReference type="NCBI Taxonomy" id="444450"/>
    <lineage>
        <taxon>Bacteria</taxon>
        <taxon>Pseudomonadati</taxon>
        <taxon>Pseudomonadota</taxon>
        <taxon>Gammaproteobacteria</taxon>
        <taxon>Enterobacterales</taxon>
        <taxon>Enterobacteriaceae</taxon>
        <taxon>Escherichia</taxon>
    </lineage>
</organism>
<keyword id="KW-0963">Cytoplasm</keyword>
<keyword id="KW-0460">Magnesium</keyword>
<keyword id="KW-0479">Metal-binding</keyword>
<keyword id="KW-0548">Nucleotidyltransferase</keyword>
<keyword id="KW-0694">RNA-binding</keyword>
<keyword id="KW-0808">Transferase</keyword>
<proteinExistence type="inferred from homology"/>
<name>PNP_ECO5E</name>
<accession>B5YS54</accession>
<gene>
    <name evidence="1" type="primary">pnp</name>
    <name type="ordered locus">ECH74115_4483</name>
</gene>
<comment type="function">
    <text evidence="1">Involved in mRNA degradation. Catalyzes the phosphorolysis of single-stranded polyribonucleotides processively in the 3'- to 5'-direction.</text>
</comment>
<comment type="catalytic activity">
    <reaction evidence="1">
        <text>RNA(n+1) + phosphate = RNA(n) + a ribonucleoside 5'-diphosphate</text>
        <dbReference type="Rhea" id="RHEA:22096"/>
        <dbReference type="Rhea" id="RHEA-COMP:14527"/>
        <dbReference type="Rhea" id="RHEA-COMP:17342"/>
        <dbReference type="ChEBI" id="CHEBI:43474"/>
        <dbReference type="ChEBI" id="CHEBI:57930"/>
        <dbReference type="ChEBI" id="CHEBI:140395"/>
        <dbReference type="EC" id="2.7.7.8"/>
    </reaction>
</comment>
<comment type="cofactor">
    <cofactor evidence="1">
        <name>Mg(2+)</name>
        <dbReference type="ChEBI" id="CHEBI:18420"/>
    </cofactor>
</comment>
<comment type="subunit">
    <text evidence="1">Component of the RNA degradosome, which is a multiprotein complex involved in RNA processing and mRNA degradation.</text>
</comment>
<comment type="subcellular location">
    <subcellularLocation>
        <location evidence="1">Cytoplasm</location>
    </subcellularLocation>
</comment>
<comment type="similarity">
    <text evidence="1">Belongs to the polyribonucleotide nucleotidyltransferase family.</text>
</comment>
<protein>
    <recommendedName>
        <fullName evidence="1">Polyribonucleotide nucleotidyltransferase</fullName>
        <ecNumber evidence="1">2.7.7.8</ecNumber>
    </recommendedName>
    <alternativeName>
        <fullName evidence="1">Polynucleotide phosphorylase</fullName>
        <shortName evidence="1">PNPase</shortName>
    </alternativeName>
</protein>
<dbReference type="EC" id="2.7.7.8" evidence="1"/>
<dbReference type="EMBL" id="CP001164">
    <property type="protein sequence ID" value="ACI36556.1"/>
    <property type="molecule type" value="Genomic_DNA"/>
</dbReference>
<dbReference type="RefSeq" id="WP_001298740.1">
    <property type="nucleotide sequence ID" value="NC_011353.1"/>
</dbReference>
<dbReference type="SMR" id="B5YS54"/>
<dbReference type="GeneID" id="93778819"/>
<dbReference type="KEGG" id="ecf:ECH74115_4483"/>
<dbReference type="HOGENOM" id="CLU_004217_2_2_6"/>
<dbReference type="GO" id="GO:0005829">
    <property type="term" value="C:cytosol"/>
    <property type="evidence" value="ECO:0007669"/>
    <property type="project" value="TreeGrafter"/>
</dbReference>
<dbReference type="GO" id="GO:0000175">
    <property type="term" value="F:3'-5'-RNA exonuclease activity"/>
    <property type="evidence" value="ECO:0007669"/>
    <property type="project" value="TreeGrafter"/>
</dbReference>
<dbReference type="GO" id="GO:0000287">
    <property type="term" value="F:magnesium ion binding"/>
    <property type="evidence" value="ECO:0007669"/>
    <property type="project" value="UniProtKB-UniRule"/>
</dbReference>
<dbReference type="GO" id="GO:0004654">
    <property type="term" value="F:polyribonucleotide nucleotidyltransferase activity"/>
    <property type="evidence" value="ECO:0007669"/>
    <property type="project" value="UniProtKB-UniRule"/>
</dbReference>
<dbReference type="GO" id="GO:0003723">
    <property type="term" value="F:RNA binding"/>
    <property type="evidence" value="ECO:0007669"/>
    <property type="project" value="UniProtKB-UniRule"/>
</dbReference>
<dbReference type="GO" id="GO:0006402">
    <property type="term" value="P:mRNA catabolic process"/>
    <property type="evidence" value="ECO:0007669"/>
    <property type="project" value="UniProtKB-UniRule"/>
</dbReference>
<dbReference type="GO" id="GO:0006396">
    <property type="term" value="P:RNA processing"/>
    <property type="evidence" value="ECO:0007669"/>
    <property type="project" value="InterPro"/>
</dbReference>
<dbReference type="CDD" id="cd02393">
    <property type="entry name" value="KH-I_PNPase"/>
    <property type="match status" value="1"/>
</dbReference>
<dbReference type="CDD" id="cd11363">
    <property type="entry name" value="RNase_PH_PNPase_1"/>
    <property type="match status" value="1"/>
</dbReference>
<dbReference type="CDD" id="cd11364">
    <property type="entry name" value="RNase_PH_PNPase_2"/>
    <property type="match status" value="1"/>
</dbReference>
<dbReference type="CDD" id="cd04472">
    <property type="entry name" value="S1_PNPase"/>
    <property type="match status" value="1"/>
</dbReference>
<dbReference type="FunFam" id="2.40.50.140:FF:000023">
    <property type="entry name" value="Polyribonucleotide nucleotidyltransferase"/>
    <property type="match status" value="1"/>
</dbReference>
<dbReference type="FunFam" id="3.30.1370.10:FF:000001">
    <property type="entry name" value="Polyribonucleotide nucleotidyltransferase"/>
    <property type="match status" value="1"/>
</dbReference>
<dbReference type="FunFam" id="3.30.230.70:FF:000001">
    <property type="entry name" value="Polyribonucleotide nucleotidyltransferase"/>
    <property type="match status" value="1"/>
</dbReference>
<dbReference type="FunFam" id="3.30.230.70:FF:000002">
    <property type="entry name" value="Polyribonucleotide nucleotidyltransferase"/>
    <property type="match status" value="1"/>
</dbReference>
<dbReference type="Gene3D" id="3.30.230.70">
    <property type="entry name" value="GHMP Kinase, N-terminal domain"/>
    <property type="match status" value="2"/>
</dbReference>
<dbReference type="Gene3D" id="3.30.1370.10">
    <property type="entry name" value="K Homology domain, type 1"/>
    <property type="match status" value="1"/>
</dbReference>
<dbReference type="Gene3D" id="2.40.50.140">
    <property type="entry name" value="Nucleic acid-binding proteins"/>
    <property type="match status" value="1"/>
</dbReference>
<dbReference type="HAMAP" id="MF_01595">
    <property type="entry name" value="PNPase"/>
    <property type="match status" value="1"/>
</dbReference>
<dbReference type="InterPro" id="IPR001247">
    <property type="entry name" value="ExoRNase_PH_dom1"/>
</dbReference>
<dbReference type="InterPro" id="IPR015847">
    <property type="entry name" value="ExoRNase_PH_dom2"/>
</dbReference>
<dbReference type="InterPro" id="IPR036345">
    <property type="entry name" value="ExoRNase_PH_dom2_sf"/>
</dbReference>
<dbReference type="InterPro" id="IPR004087">
    <property type="entry name" value="KH_dom"/>
</dbReference>
<dbReference type="InterPro" id="IPR004088">
    <property type="entry name" value="KH_dom_type_1"/>
</dbReference>
<dbReference type="InterPro" id="IPR036612">
    <property type="entry name" value="KH_dom_type_1_sf"/>
</dbReference>
<dbReference type="InterPro" id="IPR012340">
    <property type="entry name" value="NA-bd_OB-fold"/>
</dbReference>
<dbReference type="InterPro" id="IPR012162">
    <property type="entry name" value="PNPase"/>
</dbReference>
<dbReference type="InterPro" id="IPR027408">
    <property type="entry name" value="PNPase/RNase_PH_dom_sf"/>
</dbReference>
<dbReference type="InterPro" id="IPR015848">
    <property type="entry name" value="PNPase_PH_RNA-bd_bac/org-type"/>
</dbReference>
<dbReference type="InterPro" id="IPR036456">
    <property type="entry name" value="PNPase_PH_RNA-bd_sf"/>
</dbReference>
<dbReference type="InterPro" id="IPR020568">
    <property type="entry name" value="Ribosomal_Su5_D2-typ_SF"/>
</dbReference>
<dbReference type="InterPro" id="IPR003029">
    <property type="entry name" value="S1_domain"/>
</dbReference>
<dbReference type="NCBIfam" id="TIGR03591">
    <property type="entry name" value="polynuc_phos"/>
    <property type="match status" value="1"/>
</dbReference>
<dbReference type="NCBIfam" id="NF008805">
    <property type="entry name" value="PRK11824.1"/>
    <property type="match status" value="1"/>
</dbReference>
<dbReference type="PANTHER" id="PTHR11252">
    <property type="entry name" value="POLYRIBONUCLEOTIDE NUCLEOTIDYLTRANSFERASE"/>
    <property type="match status" value="1"/>
</dbReference>
<dbReference type="PANTHER" id="PTHR11252:SF0">
    <property type="entry name" value="POLYRIBONUCLEOTIDE NUCLEOTIDYLTRANSFERASE 1, MITOCHONDRIAL"/>
    <property type="match status" value="1"/>
</dbReference>
<dbReference type="Pfam" id="PF00013">
    <property type="entry name" value="KH_1"/>
    <property type="match status" value="1"/>
</dbReference>
<dbReference type="Pfam" id="PF03726">
    <property type="entry name" value="PNPase"/>
    <property type="match status" value="1"/>
</dbReference>
<dbReference type="Pfam" id="PF01138">
    <property type="entry name" value="RNase_PH"/>
    <property type="match status" value="2"/>
</dbReference>
<dbReference type="Pfam" id="PF03725">
    <property type="entry name" value="RNase_PH_C"/>
    <property type="match status" value="2"/>
</dbReference>
<dbReference type="Pfam" id="PF00575">
    <property type="entry name" value="S1"/>
    <property type="match status" value="1"/>
</dbReference>
<dbReference type="PIRSF" id="PIRSF005499">
    <property type="entry name" value="PNPase"/>
    <property type="match status" value="1"/>
</dbReference>
<dbReference type="SMART" id="SM00322">
    <property type="entry name" value="KH"/>
    <property type="match status" value="1"/>
</dbReference>
<dbReference type="SMART" id="SM00316">
    <property type="entry name" value="S1"/>
    <property type="match status" value="1"/>
</dbReference>
<dbReference type="SUPFAM" id="SSF54791">
    <property type="entry name" value="Eukaryotic type KH-domain (KH-domain type I)"/>
    <property type="match status" value="1"/>
</dbReference>
<dbReference type="SUPFAM" id="SSF50249">
    <property type="entry name" value="Nucleic acid-binding proteins"/>
    <property type="match status" value="1"/>
</dbReference>
<dbReference type="SUPFAM" id="SSF46915">
    <property type="entry name" value="Polynucleotide phosphorylase/guanosine pentaphosphate synthase (PNPase/GPSI), domain 3"/>
    <property type="match status" value="1"/>
</dbReference>
<dbReference type="SUPFAM" id="SSF55666">
    <property type="entry name" value="Ribonuclease PH domain 2-like"/>
    <property type="match status" value="2"/>
</dbReference>
<dbReference type="SUPFAM" id="SSF54211">
    <property type="entry name" value="Ribosomal protein S5 domain 2-like"/>
    <property type="match status" value="2"/>
</dbReference>
<dbReference type="PROSITE" id="PS50084">
    <property type="entry name" value="KH_TYPE_1"/>
    <property type="match status" value="1"/>
</dbReference>
<dbReference type="PROSITE" id="PS50126">
    <property type="entry name" value="S1"/>
    <property type="match status" value="1"/>
</dbReference>
<feature type="chain" id="PRO_1000147917" description="Polyribonucleotide nucleotidyltransferase">
    <location>
        <begin position="1"/>
        <end position="711"/>
    </location>
</feature>
<feature type="domain" description="KH" evidence="1">
    <location>
        <begin position="553"/>
        <end position="612"/>
    </location>
</feature>
<feature type="domain" description="S1 motif" evidence="1">
    <location>
        <begin position="622"/>
        <end position="690"/>
    </location>
</feature>
<feature type="region of interest" description="Disordered" evidence="2">
    <location>
        <begin position="689"/>
        <end position="711"/>
    </location>
</feature>
<feature type="compositionally biased region" description="Low complexity" evidence="2">
    <location>
        <begin position="694"/>
        <end position="711"/>
    </location>
</feature>
<feature type="binding site" evidence="1">
    <location>
        <position position="486"/>
    </location>
    <ligand>
        <name>Mg(2+)</name>
        <dbReference type="ChEBI" id="CHEBI:18420"/>
    </ligand>
</feature>
<feature type="binding site" evidence="1">
    <location>
        <position position="492"/>
    </location>
    <ligand>
        <name>Mg(2+)</name>
        <dbReference type="ChEBI" id="CHEBI:18420"/>
    </ligand>
</feature>
<sequence>MLNPIVRKFQYGQHTVTLETGMMARQATAAVMVSMDDTAVFVTVVGQKKAKPGQDFFPLTVNYQERTYAAGRIPGSFFRREGRPSEGETLIARLIDRPIRPLFPEGFVNEVQVIATVVSVNPQVNPDIVAMIGASAALSLSGIPFNGPIGAARVGYINDQYVLNPTQDELKESKLDLVVAGTEAAVLMVESEAELLSEDQMLGAVVFGHEQQQVVIQNINELVKEAGKPRWDWQPEPVNEALNARVAALAEARLSDAYRITDKQERYAQVDVIKSETIATLLAEDETLDENELGEILHAIEKNVVRSRVLAGEPRIDGREKDMIRGLDVRTGVLPRTHGSALFTRGETQALVTATLGTARDAQVLDELMGERTDTFLFHYNFPPYSVGETGMVGSPKRREIGHGRLAKRGVLAVMPDMDKFPYTVRVVSEITESNGSSSMASVCGASLALMDAGVPIKAAVAGIAMGLVKEGDNYVVLSDILGDEDHLGDMDFKVAGSRDGISALQMDIKIEGITKEIMQVALNQAKGARLHILGVMEQAINAPRGDISEFAPRIHTIKINPDKIKDVIGKGGSVIRALTEETGTTIEIEDDGTVKIAATDGEKAKHAIRRIEEITAEIEVGRVYTGKVTRIVDFGAFVAIGGGKEGLVHISQIADKRVEKVTDYLQMGQEVPVKVLEVDRQGRIRLSIKEATEQSQPAAAPEAPAAEQGE</sequence>
<evidence type="ECO:0000255" key="1">
    <source>
        <dbReference type="HAMAP-Rule" id="MF_01595"/>
    </source>
</evidence>
<evidence type="ECO:0000256" key="2">
    <source>
        <dbReference type="SAM" id="MobiDB-lite"/>
    </source>
</evidence>
<reference key="1">
    <citation type="journal article" date="2011" name="Proc. Natl. Acad. Sci. U.S.A.">
        <title>Genomic anatomy of Escherichia coli O157:H7 outbreaks.</title>
        <authorList>
            <person name="Eppinger M."/>
            <person name="Mammel M.K."/>
            <person name="Leclerc J.E."/>
            <person name="Ravel J."/>
            <person name="Cebula T.A."/>
        </authorList>
    </citation>
    <scope>NUCLEOTIDE SEQUENCE [LARGE SCALE GENOMIC DNA]</scope>
    <source>
        <strain>EC4115 / EHEC</strain>
    </source>
</reference>